<protein>
    <recommendedName>
        <fullName evidence="1">Cysteine desulfurase IscS</fullName>
        <ecNumber evidence="1">2.8.1.7</ecNumber>
    </recommendedName>
</protein>
<comment type="function">
    <text evidence="1">Master enzyme that delivers sulfur to a number of partners involved in Fe-S cluster assembly, tRNA modification or cofactor biosynthesis. Catalyzes the removal of elemental sulfur atoms from cysteine to produce alanine. Functions as a sulfur delivery protein for Fe-S cluster synthesis onto IscU, an Fe-S scaffold assembly protein, as well as other S acceptor proteins.</text>
</comment>
<comment type="catalytic activity">
    <reaction evidence="1">
        <text>(sulfur carrier)-H + L-cysteine = (sulfur carrier)-SH + L-alanine</text>
        <dbReference type="Rhea" id="RHEA:43892"/>
        <dbReference type="Rhea" id="RHEA-COMP:14737"/>
        <dbReference type="Rhea" id="RHEA-COMP:14739"/>
        <dbReference type="ChEBI" id="CHEBI:29917"/>
        <dbReference type="ChEBI" id="CHEBI:35235"/>
        <dbReference type="ChEBI" id="CHEBI:57972"/>
        <dbReference type="ChEBI" id="CHEBI:64428"/>
        <dbReference type="EC" id="2.8.1.7"/>
    </reaction>
</comment>
<comment type="cofactor">
    <cofactor evidence="1">
        <name>pyridoxal 5'-phosphate</name>
        <dbReference type="ChEBI" id="CHEBI:597326"/>
    </cofactor>
</comment>
<comment type="pathway">
    <text evidence="1">Cofactor biosynthesis; iron-sulfur cluster biosynthesis.</text>
</comment>
<comment type="subunit">
    <text evidence="1">Homodimer. Forms a heterotetramer with IscU, interacts with other sulfur acceptors.</text>
</comment>
<comment type="subcellular location">
    <subcellularLocation>
        <location evidence="1">Cytoplasm</location>
    </subcellularLocation>
</comment>
<comment type="similarity">
    <text evidence="1">Belongs to the class-V pyridoxal-phosphate-dependent aminotransferase family. NifS/IscS subfamily.</text>
</comment>
<organism>
    <name type="scientific">Shewanella sp. (strain W3-18-1)</name>
    <dbReference type="NCBI Taxonomy" id="351745"/>
    <lineage>
        <taxon>Bacteria</taxon>
        <taxon>Pseudomonadati</taxon>
        <taxon>Pseudomonadota</taxon>
        <taxon>Gammaproteobacteria</taxon>
        <taxon>Alteromonadales</taxon>
        <taxon>Shewanellaceae</taxon>
        <taxon>Shewanella</taxon>
    </lineage>
</organism>
<reference key="1">
    <citation type="submission" date="2006-12" db="EMBL/GenBank/DDBJ databases">
        <title>Complete sequence of Shewanella sp. W3-18-1.</title>
        <authorList>
            <consortium name="US DOE Joint Genome Institute"/>
            <person name="Copeland A."/>
            <person name="Lucas S."/>
            <person name="Lapidus A."/>
            <person name="Barry K."/>
            <person name="Detter J.C."/>
            <person name="Glavina del Rio T."/>
            <person name="Hammon N."/>
            <person name="Israni S."/>
            <person name="Dalin E."/>
            <person name="Tice H."/>
            <person name="Pitluck S."/>
            <person name="Chain P."/>
            <person name="Malfatti S."/>
            <person name="Shin M."/>
            <person name="Vergez L."/>
            <person name="Schmutz J."/>
            <person name="Larimer F."/>
            <person name="Land M."/>
            <person name="Hauser L."/>
            <person name="Kyrpides N."/>
            <person name="Lykidis A."/>
            <person name="Tiedje J."/>
            <person name="Richardson P."/>
        </authorList>
    </citation>
    <scope>NUCLEOTIDE SEQUENCE [LARGE SCALE GENOMIC DNA]</scope>
    <source>
        <strain>W3-18-1</strain>
    </source>
</reference>
<dbReference type="EC" id="2.8.1.7" evidence="1"/>
<dbReference type="EMBL" id="CP000503">
    <property type="protein sequence ID" value="ABM24697.1"/>
    <property type="molecule type" value="Genomic_DNA"/>
</dbReference>
<dbReference type="RefSeq" id="WP_011789189.1">
    <property type="nucleotide sequence ID" value="NC_008750.1"/>
</dbReference>
<dbReference type="SMR" id="A1RJ52"/>
<dbReference type="KEGG" id="shw:Sputw3181_1862"/>
<dbReference type="HOGENOM" id="CLU_003433_0_2_6"/>
<dbReference type="UniPathway" id="UPA00266"/>
<dbReference type="Proteomes" id="UP000002597">
    <property type="component" value="Chromosome"/>
</dbReference>
<dbReference type="GO" id="GO:1990221">
    <property type="term" value="C:L-cysteine desulfurase complex"/>
    <property type="evidence" value="ECO:0007669"/>
    <property type="project" value="UniProtKB-ARBA"/>
</dbReference>
<dbReference type="GO" id="GO:0051537">
    <property type="term" value="F:2 iron, 2 sulfur cluster binding"/>
    <property type="evidence" value="ECO:0007669"/>
    <property type="project" value="UniProtKB-UniRule"/>
</dbReference>
<dbReference type="GO" id="GO:0031071">
    <property type="term" value="F:cysteine desulfurase activity"/>
    <property type="evidence" value="ECO:0007669"/>
    <property type="project" value="UniProtKB-UniRule"/>
</dbReference>
<dbReference type="GO" id="GO:0046872">
    <property type="term" value="F:metal ion binding"/>
    <property type="evidence" value="ECO:0007669"/>
    <property type="project" value="UniProtKB-KW"/>
</dbReference>
<dbReference type="GO" id="GO:0030170">
    <property type="term" value="F:pyridoxal phosphate binding"/>
    <property type="evidence" value="ECO:0007669"/>
    <property type="project" value="UniProtKB-UniRule"/>
</dbReference>
<dbReference type="GO" id="GO:0044571">
    <property type="term" value="P:[2Fe-2S] cluster assembly"/>
    <property type="evidence" value="ECO:0007669"/>
    <property type="project" value="UniProtKB-UniRule"/>
</dbReference>
<dbReference type="FunFam" id="3.40.640.10:FF:000003">
    <property type="entry name" value="Cysteine desulfurase IscS"/>
    <property type="match status" value="1"/>
</dbReference>
<dbReference type="FunFam" id="3.90.1150.10:FF:000002">
    <property type="entry name" value="Cysteine desulfurase IscS"/>
    <property type="match status" value="1"/>
</dbReference>
<dbReference type="Gene3D" id="3.90.1150.10">
    <property type="entry name" value="Aspartate Aminotransferase, domain 1"/>
    <property type="match status" value="1"/>
</dbReference>
<dbReference type="Gene3D" id="3.40.640.10">
    <property type="entry name" value="Type I PLP-dependent aspartate aminotransferase-like (Major domain)"/>
    <property type="match status" value="1"/>
</dbReference>
<dbReference type="HAMAP" id="MF_00331">
    <property type="entry name" value="Cys_desulf_IscS"/>
    <property type="match status" value="1"/>
</dbReference>
<dbReference type="InterPro" id="IPR000192">
    <property type="entry name" value="Aminotrans_V_dom"/>
</dbReference>
<dbReference type="InterPro" id="IPR020578">
    <property type="entry name" value="Aminotrans_V_PyrdxlP_BS"/>
</dbReference>
<dbReference type="InterPro" id="IPR010240">
    <property type="entry name" value="Cys_deSase_IscS"/>
</dbReference>
<dbReference type="InterPro" id="IPR016454">
    <property type="entry name" value="Cysteine_dSase"/>
</dbReference>
<dbReference type="InterPro" id="IPR015424">
    <property type="entry name" value="PyrdxlP-dep_Trfase"/>
</dbReference>
<dbReference type="InterPro" id="IPR015421">
    <property type="entry name" value="PyrdxlP-dep_Trfase_major"/>
</dbReference>
<dbReference type="InterPro" id="IPR015422">
    <property type="entry name" value="PyrdxlP-dep_Trfase_small"/>
</dbReference>
<dbReference type="NCBIfam" id="TIGR02006">
    <property type="entry name" value="IscS"/>
    <property type="match status" value="1"/>
</dbReference>
<dbReference type="NCBIfam" id="NF002806">
    <property type="entry name" value="PRK02948.1"/>
    <property type="match status" value="1"/>
</dbReference>
<dbReference type="NCBIfam" id="NF010611">
    <property type="entry name" value="PRK14012.1"/>
    <property type="match status" value="1"/>
</dbReference>
<dbReference type="PANTHER" id="PTHR11601:SF34">
    <property type="entry name" value="CYSTEINE DESULFURASE"/>
    <property type="match status" value="1"/>
</dbReference>
<dbReference type="PANTHER" id="PTHR11601">
    <property type="entry name" value="CYSTEINE DESULFURYLASE FAMILY MEMBER"/>
    <property type="match status" value="1"/>
</dbReference>
<dbReference type="Pfam" id="PF00266">
    <property type="entry name" value="Aminotran_5"/>
    <property type="match status" value="1"/>
</dbReference>
<dbReference type="PIRSF" id="PIRSF005572">
    <property type="entry name" value="NifS"/>
    <property type="match status" value="1"/>
</dbReference>
<dbReference type="SUPFAM" id="SSF53383">
    <property type="entry name" value="PLP-dependent transferases"/>
    <property type="match status" value="1"/>
</dbReference>
<dbReference type="PROSITE" id="PS00595">
    <property type="entry name" value="AA_TRANSFER_CLASS_5"/>
    <property type="match status" value="1"/>
</dbReference>
<accession>A1RJ52</accession>
<evidence type="ECO:0000255" key="1">
    <source>
        <dbReference type="HAMAP-Rule" id="MF_00331"/>
    </source>
</evidence>
<feature type="chain" id="PRO_1000019451" description="Cysteine desulfurase IscS">
    <location>
        <begin position="1"/>
        <end position="404"/>
    </location>
</feature>
<feature type="active site" description="Cysteine persulfide intermediate" evidence="1">
    <location>
        <position position="328"/>
    </location>
</feature>
<feature type="binding site" evidence="1">
    <location>
        <begin position="75"/>
        <end position="76"/>
    </location>
    <ligand>
        <name>pyridoxal 5'-phosphate</name>
        <dbReference type="ChEBI" id="CHEBI:597326"/>
    </ligand>
</feature>
<feature type="binding site" evidence="1">
    <location>
        <position position="155"/>
    </location>
    <ligand>
        <name>pyridoxal 5'-phosphate</name>
        <dbReference type="ChEBI" id="CHEBI:597326"/>
    </ligand>
</feature>
<feature type="binding site" evidence="1">
    <location>
        <position position="183"/>
    </location>
    <ligand>
        <name>pyridoxal 5'-phosphate</name>
        <dbReference type="ChEBI" id="CHEBI:597326"/>
    </ligand>
</feature>
<feature type="binding site" evidence="1">
    <location>
        <begin position="203"/>
        <end position="205"/>
    </location>
    <ligand>
        <name>pyridoxal 5'-phosphate</name>
        <dbReference type="ChEBI" id="CHEBI:597326"/>
    </ligand>
</feature>
<feature type="binding site" evidence="1">
    <location>
        <position position="243"/>
    </location>
    <ligand>
        <name>pyridoxal 5'-phosphate</name>
        <dbReference type="ChEBI" id="CHEBI:597326"/>
    </ligand>
</feature>
<feature type="binding site" description="via persulfide group" evidence="1">
    <location>
        <position position="328"/>
    </location>
    <ligand>
        <name>[2Fe-2S] cluster</name>
        <dbReference type="ChEBI" id="CHEBI:190135"/>
        <note>ligand shared with IscU</note>
    </ligand>
</feature>
<feature type="modified residue" description="N6-(pyridoxal phosphate)lysine" evidence="1">
    <location>
        <position position="206"/>
    </location>
</feature>
<proteinExistence type="inferred from homology"/>
<gene>
    <name evidence="1" type="primary">iscS</name>
    <name type="ordered locus">Sputw3181_1862</name>
</gene>
<keyword id="KW-0001">2Fe-2S</keyword>
<keyword id="KW-0963">Cytoplasm</keyword>
<keyword id="KW-0408">Iron</keyword>
<keyword id="KW-0411">Iron-sulfur</keyword>
<keyword id="KW-0479">Metal-binding</keyword>
<keyword id="KW-0663">Pyridoxal phosphate</keyword>
<keyword id="KW-0808">Transferase</keyword>
<sequence>MKLPIYLDYAATTPVDPRVAEKMFQYMTMDGIFGNPASRSHRYGWQAEEAVDIARNQVADLINADHREIVFTSGATESNNLAIKGVAHFYNKKGKHIITSKTEHKAVLDTCRQLEREGFEVTYLEPASNGIIPMERLEAAMRDDTILVSIMHVNNEIGVIHDIDAIGELCRSKGIIFHMDAAQSAGKLPIDVQATKVDLISISGHKMYGPKGIGALYVRRKPRIRLEAQMHGGGHERGMRSGTLPTHQIVGLGEAAAIAKAEMATDNERIGRLRDKLWNGIKHIEETYINGDLTQRFCGSLNVSFNYVEGESLMMALKDLAVSSGSACTSASLEPSYVLRALGLNDEMAHSSIRFSIGRFTTEEEIDHAIETITQSIDKLREMSPLWEMFKDGIDLNQVQWAHH</sequence>
<name>ISCS_SHESW</name>